<gene>
    <name evidence="1" type="primary">rpsM</name>
    <name type="ordered locus">DET0499</name>
</gene>
<evidence type="ECO:0000255" key="1">
    <source>
        <dbReference type="HAMAP-Rule" id="MF_01315"/>
    </source>
</evidence>
<evidence type="ECO:0000256" key="2">
    <source>
        <dbReference type="SAM" id="MobiDB-lite"/>
    </source>
</evidence>
<evidence type="ECO:0000305" key="3"/>
<comment type="function">
    <text evidence="1">Located at the top of the head of the 30S subunit, it contacts several helices of the 16S rRNA. In the 70S ribosome it contacts the 23S rRNA (bridge B1a) and protein L5 of the 50S subunit (bridge B1b), connecting the 2 subunits; these bridges are implicated in subunit movement. Contacts the tRNAs in the A and P-sites.</text>
</comment>
<comment type="subunit">
    <text evidence="1">Part of the 30S ribosomal subunit. Forms a loose heterodimer with protein S19. Forms two bridges to the 50S subunit in the 70S ribosome.</text>
</comment>
<comment type="similarity">
    <text evidence="1">Belongs to the universal ribosomal protein uS13 family.</text>
</comment>
<protein>
    <recommendedName>
        <fullName evidence="1">Small ribosomal subunit protein uS13</fullName>
    </recommendedName>
    <alternativeName>
        <fullName evidence="3">30S ribosomal protein S13</fullName>
    </alternativeName>
</protein>
<name>RS13_DEHM1</name>
<sequence length="129" mass="14779">MVRIAGTDIPDNKQVYFSLQYIFGIGPARSEKVLVQAGVDKAIRVNKLTDEEINRLREIIDKEYRVEGDLRKEIALNIKRLIDIGCYRGNRHKHNLPVRGQRTKTNARTRRGPRKTVAGRGQKRGATKK</sequence>
<accession>Q3Z956</accession>
<proteinExistence type="inferred from homology"/>
<dbReference type="EMBL" id="CP000027">
    <property type="protein sequence ID" value="AAW40259.1"/>
    <property type="molecule type" value="Genomic_DNA"/>
</dbReference>
<dbReference type="RefSeq" id="WP_010936276.1">
    <property type="nucleotide sequence ID" value="NC_002936.3"/>
</dbReference>
<dbReference type="SMR" id="Q3Z956"/>
<dbReference type="FunCoup" id="Q3Z956">
    <property type="interactions" value="371"/>
</dbReference>
<dbReference type="STRING" id="243164.DET0499"/>
<dbReference type="GeneID" id="3230223"/>
<dbReference type="KEGG" id="det:DET0499"/>
<dbReference type="PATRIC" id="fig|243164.10.peg.477"/>
<dbReference type="eggNOG" id="COG0099">
    <property type="taxonomic scope" value="Bacteria"/>
</dbReference>
<dbReference type="HOGENOM" id="CLU_103849_1_2_0"/>
<dbReference type="InParanoid" id="Q3Z956"/>
<dbReference type="Proteomes" id="UP000008289">
    <property type="component" value="Chromosome"/>
</dbReference>
<dbReference type="GO" id="GO:0005829">
    <property type="term" value="C:cytosol"/>
    <property type="evidence" value="ECO:0007669"/>
    <property type="project" value="TreeGrafter"/>
</dbReference>
<dbReference type="GO" id="GO:0015935">
    <property type="term" value="C:small ribosomal subunit"/>
    <property type="evidence" value="ECO:0007669"/>
    <property type="project" value="TreeGrafter"/>
</dbReference>
<dbReference type="GO" id="GO:0019843">
    <property type="term" value="F:rRNA binding"/>
    <property type="evidence" value="ECO:0007669"/>
    <property type="project" value="UniProtKB-UniRule"/>
</dbReference>
<dbReference type="GO" id="GO:0003735">
    <property type="term" value="F:structural constituent of ribosome"/>
    <property type="evidence" value="ECO:0007669"/>
    <property type="project" value="InterPro"/>
</dbReference>
<dbReference type="GO" id="GO:0000049">
    <property type="term" value="F:tRNA binding"/>
    <property type="evidence" value="ECO:0007669"/>
    <property type="project" value="UniProtKB-UniRule"/>
</dbReference>
<dbReference type="GO" id="GO:0006412">
    <property type="term" value="P:translation"/>
    <property type="evidence" value="ECO:0007669"/>
    <property type="project" value="UniProtKB-UniRule"/>
</dbReference>
<dbReference type="FunFam" id="1.10.8.50:FF:000001">
    <property type="entry name" value="30S ribosomal protein S13"/>
    <property type="match status" value="1"/>
</dbReference>
<dbReference type="FunFam" id="4.10.910.10:FF:000001">
    <property type="entry name" value="30S ribosomal protein S13"/>
    <property type="match status" value="1"/>
</dbReference>
<dbReference type="Gene3D" id="1.10.8.50">
    <property type="match status" value="1"/>
</dbReference>
<dbReference type="Gene3D" id="4.10.910.10">
    <property type="entry name" value="30s ribosomal protein s13, domain 2"/>
    <property type="match status" value="1"/>
</dbReference>
<dbReference type="HAMAP" id="MF_01315">
    <property type="entry name" value="Ribosomal_uS13"/>
    <property type="match status" value="1"/>
</dbReference>
<dbReference type="InterPro" id="IPR027437">
    <property type="entry name" value="Rbsml_uS13_C"/>
</dbReference>
<dbReference type="InterPro" id="IPR001892">
    <property type="entry name" value="Ribosomal_uS13"/>
</dbReference>
<dbReference type="InterPro" id="IPR010979">
    <property type="entry name" value="Ribosomal_uS13-like_H2TH"/>
</dbReference>
<dbReference type="InterPro" id="IPR019980">
    <property type="entry name" value="Ribosomal_uS13_bac-type"/>
</dbReference>
<dbReference type="InterPro" id="IPR018269">
    <property type="entry name" value="Ribosomal_uS13_CS"/>
</dbReference>
<dbReference type="NCBIfam" id="TIGR03631">
    <property type="entry name" value="uS13_bact"/>
    <property type="match status" value="1"/>
</dbReference>
<dbReference type="PANTHER" id="PTHR10871">
    <property type="entry name" value="30S RIBOSOMAL PROTEIN S13/40S RIBOSOMAL PROTEIN S18"/>
    <property type="match status" value="1"/>
</dbReference>
<dbReference type="PANTHER" id="PTHR10871:SF1">
    <property type="entry name" value="SMALL RIBOSOMAL SUBUNIT PROTEIN US13M"/>
    <property type="match status" value="1"/>
</dbReference>
<dbReference type="Pfam" id="PF00416">
    <property type="entry name" value="Ribosomal_S13"/>
    <property type="match status" value="1"/>
</dbReference>
<dbReference type="PIRSF" id="PIRSF002134">
    <property type="entry name" value="Ribosomal_S13"/>
    <property type="match status" value="1"/>
</dbReference>
<dbReference type="SUPFAM" id="SSF46946">
    <property type="entry name" value="S13-like H2TH domain"/>
    <property type="match status" value="1"/>
</dbReference>
<dbReference type="PROSITE" id="PS00646">
    <property type="entry name" value="RIBOSOMAL_S13_1"/>
    <property type="match status" value="1"/>
</dbReference>
<dbReference type="PROSITE" id="PS50159">
    <property type="entry name" value="RIBOSOMAL_S13_2"/>
    <property type="match status" value="1"/>
</dbReference>
<feature type="chain" id="PRO_0000230498" description="Small ribosomal subunit protein uS13">
    <location>
        <begin position="1"/>
        <end position="129"/>
    </location>
</feature>
<feature type="region of interest" description="Disordered" evidence="2">
    <location>
        <begin position="92"/>
        <end position="129"/>
    </location>
</feature>
<feature type="compositionally biased region" description="Basic residues" evidence="2">
    <location>
        <begin position="92"/>
        <end position="114"/>
    </location>
</feature>
<organism>
    <name type="scientific">Dehalococcoides mccartyi (strain ATCC BAA-2266 / KCTC 15142 / 195)</name>
    <name type="common">Dehalococcoides ethenogenes (strain 195)</name>
    <dbReference type="NCBI Taxonomy" id="243164"/>
    <lineage>
        <taxon>Bacteria</taxon>
        <taxon>Bacillati</taxon>
        <taxon>Chloroflexota</taxon>
        <taxon>Dehalococcoidia</taxon>
        <taxon>Dehalococcoidales</taxon>
        <taxon>Dehalococcoidaceae</taxon>
        <taxon>Dehalococcoides</taxon>
    </lineage>
</organism>
<keyword id="KW-0687">Ribonucleoprotein</keyword>
<keyword id="KW-0689">Ribosomal protein</keyword>
<keyword id="KW-0694">RNA-binding</keyword>
<keyword id="KW-0699">rRNA-binding</keyword>
<keyword id="KW-0820">tRNA-binding</keyword>
<reference key="1">
    <citation type="journal article" date="2005" name="Science">
        <title>Genome sequence of the PCE-dechlorinating bacterium Dehalococcoides ethenogenes.</title>
        <authorList>
            <person name="Seshadri R."/>
            <person name="Adrian L."/>
            <person name="Fouts D.E."/>
            <person name="Eisen J.A."/>
            <person name="Phillippy A.M."/>
            <person name="Methe B.A."/>
            <person name="Ward N.L."/>
            <person name="Nelson W.C."/>
            <person name="DeBoy R.T."/>
            <person name="Khouri H.M."/>
            <person name="Kolonay J.F."/>
            <person name="Dodson R.J."/>
            <person name="Daugherty S.C."/>
            <person name="Brinkac L.M."/>
            <person name="Sullivan S.A."/>
            <person name="Madupu R."/>
            <person name="Nelson K.E."/>
            <person name="Kang K.H."/>
            <person name="Impraim M."/>
            <person name="Tran K."/>
            <person name="Robinson J.M."/>
            <person name="Forberger H.A."/>
            <person name="Fraser C.M."/>
            <person name="Zinder S.H."/>
            <person name="Heidelberg J.F."/>
        </authorList>
    </citation>
    <scope>NUCLEOTIDE SEQUENCE [LARGE SCALE GENOMIC DNA]</scope>
    <source>
        <strain>ATCC BAA-2266 / KCTC 15142 / 195</strain>
    </source>
</reference>